<accession>Q5HFG2</accession>
<dbReference type="EC" id="3.2.2.9" evidence="1"/>
<dbReference type="EMBL" id="CP000046">
    <property type="protein sequence ID" value="AAW38271.1"/>
    <property type="molecule type" value="Genomic_DNA"/>
</dbReference>
<dbReference type="RefSeq" id="WP_000579275.1">
    <property type="nucleotide sequence ID" value="NZ_JBGOFO010000003.1"/>
</dbReference>
<dbReference type="SMR" id="Q5HFG2"/>
<dbReference type="BindingDB" id="Q5HFG2"/>
<dbReference type="KEGG" id="sac:SACOL1655"/>
<dbReference type="HOGENOM" id="CLU_031248_2_2_9"/>
<dbReference type="UniPathway" id="UPA00904">
    <property type="reaction ID" value="UER00871"/>
</dbReference>
<dbReference type="Proteomes" id="UP000000530">
    <property type="component" value="Chromosome"/>
</dbReference>
<dbReference type="GO" id="GO:0005829">
    <property type="term" value="C:cytosol"/>
    <property type="evidence" value="ECO:0007669"/>
    <property type="project" value="TreeGrafter"/>
</dbReference>
<dbReference type="GO" id="GO:0008782">
    <property type="term" value="F:adenosylhomocysteine nucleosidase activity"/>
    <property type="evidence" value="ECO:0007669"/>
    <property type="project" value="UniProtKB-UniRule"/>
</dbReference>
<dbReference type="GO" id="GO:0008930">
    <property type="term" value="F:methylthioadenosine nucleosidase activity"/>
    <property type="evidence" value="ECO:0007669"/>
    <property type="project" value="UniProtKB-UniRule"/>
</dbReference>
<dbReference type="GO" id="GO:0019509">
    <property type="term" value="P:L-methionine salvage from methylthioadenosine"/>
    <property type="evidence" value="ECO:0007669"/>
    <property type="project" value="UniProtKB-UniRule"/>
</dbReference>
<dbReference type="GO" id="GO:0019284">
    <property type="term" value="P:L-methionine salvage from S-adenosylmethionine"/>
    <property type="evidence" value="ECO:0007669"/>
    <property type="project" value="TreeGrafter"/>
</dbReference>
<dbReference type="GO" id="GO:0009164">
    <property type="term" value="P:nucleoside catabolic process"/>
    <property type="evidence" value="ECO:0007669"/>
    <property type="project" value="InterPro"/>
</dbReference>
<dbReference type="CDD" id="cd09008">
    <property type="entry name" value="MTAN"/>
    <property type="match status" value="1"/>
</dbReference>
<dbReference type="FunFam" id="3.40.50.1580:FF:000001">
    <property type="entry name" value="MTA/SAH nucleosidase family protein"/>
    <property type="match status" value="1"/>
</dbReference>
<dbReference type="Gene3D" id="3.40.50.1580">
    <property type="entry name" value="Nucleoside phosphorylase domain"/>
    <property type="match status" value="1"/>
</dbReference>
<dbReference type="HAMAP" id="MF_01684">
    <property type="entry name" value="Salvage_MtnN"/>
    <property type="match status" value="1"/>
</dbReference>
<dbReference type="InterPro" id="IPR010049">
    <property type="entry name" value="MTA_SAH_Nsdase"/>
</dbReference>
<dbReference type="InterPro" id="IPR000845">
    <property type="entry name" value="Nucleoside_phosphorylase_d"/>
</dbReference>
<dbReference type="InterPro" id="IPR035994">
    <property type="entry name" value="Nucleoside_phosphorylase_sf"/>
</dbReference>
<dbReference type="NCBIfam" id="TIGR01704">
    <property type="entry name" value="MTA_SAH-Nsdase"/>
    <property type="match status" value="1"/>
</dbReference>
<dbReference type="NCBIfam" id="NF004079">
    <property type="entry name" value="PRK05584.1"/>
    <property type="match status" value="1"/>
</dbReference>
<dbReference type="PANTHER" id="PTHR46832">
    <property type="entry name" value="5'-METHYLTHIOADENOSINE/S-ADENOSYLHOMOCYSTEINE NUCLEOSIDASE"/>
    <property type="match status" value="1"/>
</dbReference>
<dbReference type="PANTHER" id="PTHR46832:SF1">
    <property type="entry name" value="5'-METHYLTHIOADENOSINE_S-ADENOSYLHOMOCYSTEINE NUCLEOSIDASE"/>
    <property type="match status" value="1"/>
</dbReference>
<dbReference type="Pfam" id="PF01048">
    <property type="entry name" value="PNP_UDP_1"/>
    <property type="match status" value="1"/>
</dbReference>
<dbReference type="SUPFAM" id="SSF53167">
    <property type="entry name" value="Purine and uridine phosphorylases"/>
    <property type="match status" value="1"/>
</dbReference>
<feature type="chain" id="PRO_0000359363" description="5'-methylthioadenosine/S-adenosylhomocysteine nucleosidase">
    <location>
        <begin position="1"/>
        <end position="228"/>
    </location>
</feature>
<feature type="active site" description="Proton acceptor" evidence="1">
    <location>
        <position position="11"/>
    </location>
</feature>
<feature type="active site" description="Proton donor" evidence="1">
    <location>
        <position position="196"/>
    </location>
</feature>
<feature type="binding site" evidence="1">
    <location>
        <position position="77"/>
    </location>
    <ligand>
        <name>substrate</name>
    </ligand>
</feature>
<feature type="binding site" evidence="1">
    <location>
        <position position="151"/>
    </location>
    <ligand>
        <name>substrate</name>
    </ligand>
</feature>
<feature type="binding site" evidence="1">
    <location>
        <begin position="172"/>
        <end position="173"/>
    </location>
    <ligand>
        <name>substrate</name>
    </ligand>
</feature>
<evidence type="ECO:0000255" key="1">
    <source>
        <dbReference type="HAMAP-Rule" id="MF_01684"/>
    </source>
</evidence>
<proteinExistence type="inferred from homology"/>
<reference key="1">
    <citation type="journal article" date="2005" name="J. Bacteriol.">
        <title>Insights on evolution of virulence and resistance from the complete genome analysis of an early methicillin-resistant Staphylococcus aureus strain and a biofilm-producing methicillin-resistant Staphylococcus epidermidis strain.</title>
        <authorList>
            <person name="Gill S.R."/>
            <person name="Fouts D.E."/>
            <person name="Archer G.L."/>
            <person name="Mongodin E.F."/>
            <person name="DeBoy R.T."/>
            <person name="Ravel J."/>
            <person name="Paulsen I.T."/>
            <person name="Kolonay J.F."/>
            <person name="Brinkac L.M."/>
            <person name="Beanan M.J."/>
            <person name="Dodson R.J."/>
            <person name="Daugherty S.C."/>
            <person name="Madupu R."/>
            <person name="Angiuoli S.V."/>
            <person name="Durkin A.S."/>
            <person name="Haft D.H."/>
            <person name="Vamathevan J.J."/>
            <person name="Khouri H."/>
            <person name="Utterback T.R."/>
            <person name="Lee C."/>
            <person name="Dimitrov G."/>
            <person name="Jiang L."/>
            <person name="Qin H."/>
            <person name="Weidman J."/>
            <person name="Tran K."/>
            <person name="Kang K.H."/>
            <person name="Hance I.R."/>
            <person name="Nelson K.E."/>
            <person name="Fraser C.M."/>
        </authorList>
    </citation>
    <scope>NUCLEOTIDE SEQUENCE [LARGE SCALE GENOMIC DNA]</scope>
    <source>
        <strain>COL</strain>
    </source>
</reference>
<protein>
    <recommendedName>
        <fullName evidence="1">5'-methylthioadenosine/S-adenosylhomocysteine nucleosidase</fullName>
        <shortName evidence="1">MTA/SAH nucleosidase</shortName>
        <shortName evidence="1">MTAN</shortName>
        <ecNumber evidence="1">3.2.2.9</ecNumber>
    </recommendedName>
    <alternativeName>
        <fullName evidence="1">5'-deoxyadenosine nucleosidase</fullName>
        <shortName evidence="1">DOA nucleosidase</shortName>
        <shortName evidence="1">dAdo nucleosidase</shortName>
    </alternativeName>
    <alternativeName>
        <fullName evidence="1">5'-methylthioadenosine nucleosidase</fullName>
        <shortName evidence="1">MTA nucleosidase</shortName>
    </alternativeName>
    <alternativeName>
        <fullName evidence="1">S-adenosylhomocysteine nucleosidase</fullName>
        <shortName evidence="1">AdoHcy nucleosidase</shortName>
        <shortName evidence="1">SAH nucleosidase</shortName>
        <shortName evidence="1">SRH nucleosidase</shortName>
    </alternativeName>
</protein>
<gene>
    <name evidence="1" type="primary">mtnN</name>
    <name type="ordered locus">SACOL1655</name>
</gene>
<comment type="function">
    <text evidence="1">Catalyzes the irreversible cleavage of the glycosidic bond in both 5'-methylthioadenosine (MTA) and S-adenosylhomocysteine (SAH/AdoHcy) to adenine and the corresponding thioribose, 5'-methylthioribose and S-ribosylhomocysteine, respectively. Also cleaves 5'-deoxyadenosine, a toxic by-product of radical S-adenosylmethionine (SAM) enzymes, into 5-deoxyribose and adenine.</text>
</comment>
<comment type="catalytic activity">
    <reaction evidence="1">
        <text>S-adenosyl-L-homocysteine + H2O = S-(5-deoxy-D-ribos-5-yl)-L-homocysteine + adenine</text>
        <dbReference type="Rhea" id="RHEA:17805"/>
        <dbReference type="ChEBI" id="CHEBI:15377"/>
        <dbReference type="ChEBI" id="CHEBI:16708"/>
        <dbReference type="ChEBI" id="CHEBI:57856"/>
        <dbReference type="ChEBI" id="CHEBI:58195"/>
        <dbReference type="EC" id="3.2.2.9"/>
    </reaction>
</comment>
<comment type="catalytic activity">
    <reaction evidence="1">
        <text>S-methyl-5'-thioadenosine + H2O = 5-(methylsulfanyl)-D-ribose + adenine</text>
        <dbReference type="Rhea" id="RHEA:13617"/>
        <dbReference type="ChEBI" id="CHEBI:15377"/>
        <dbReference type="ChEBI" id="CHEBI:16708"/>
        <dbReference type="ChEBI" id="CHEBI:17509"/>
        <dbReference type="ChEBI" id="CHEBI:78440"/>
        <dbReference type="EC" id="3.2.2.9"/>
    </reaction>
</comment>
<comment type="catalytic activity">
    <reaction evidence="1">
        <text>5'-deoxyadenosine + H2O = 5-deoxy-D-ribose + adenine</text>
        <dbReference type="Rhea" id="RHEA:29859"/>
        <dbReference type="ChEBI" id="CHEBI:15377"/>
        <dbReference type="ChEBI" id="CHEBI:16708"/>
        <dbReference type="ChEBI" id="CHEBI:17319"/>
        <dbReference type="ChEBI" id="CHEBI:149540"/>
        <dbReference type="EC" id="3.2.2.9"/>
    </reaction>
    <physiologicalReaction direction="left-to-right" evidence="1">
        <dbReference type="Rhea" id="RHEA:29860"/>
    </physiologicalReaction>
</comment>
<comment type="pathway">
    <text evidence="1">Amino-acid biosynthesis; L-methionine biosynthesis via salvage pathway; S-methyl-5-thio-alpha-D-ribose 1-phosphate from S-methyl-5'-thioadenosine (hydrolase route): step 1/2.</text>
</comment>
<comment type="similarity">
    <text evidence="1">Belongs to the PNP/UDP phosphorylase family. MtnN subfamily.</text>
</comment>
<organism>
    <name type="scientific">Staphylococcus aureus (strain COL)</name>
    <dbReference type="NCBI Taxonomy" id="93062"/>
    <lineage>
        <taxon>Bacteria</taxon>
        <taxon>Bacillati</taxon>
        <taxon>Bacillota</taxon>
        <taxon>Bacilli</taxon>
        <taxon>Bacillales</taxon>
        <taxon>Staphylococcaceae</taxon>
        <taxon>Staphylococcus</taxon>
    </lineage>
</organism>
<keyword id="KW-0028">Amino-acid biosynthesis</keyword>
<keyword id="KW-0378">Hydrolase</keyword>
<keyword id="KW-0486">Methionine biosynthesis</keyword>
<sequence length="228" mass="24534">MIGIIGAMEEEVTILKNKLTQLSEISVAHVKFYTGILKDREVVITQSGIGKVNAAISTTLLINKFKPDVIINTGSAGALDESLNVGDVLISDDVKYHDADATAFGYEYGQIPQMPVAFQSSKPLIEKVSQVVQQQQLTAKVGLIVSGDSFIGSVEQRQKIKKAFPNAMAVEMEATAIAQTCYQFNVPFVVVRAVSDLANGEAEMSFEAFLEKAAVSSSQTVEALVSQL</sequence>
<name>MTNN_STAAC</name>